<dbReference type="EC" id="2.5.1.145" evidence="1"/>
<dbReference type="EMBL" id="CP001025">
    <property type="protein sequence ID" value="ACB64855.1"/>
    <property type="molecule type" value="Genomic_DNA"/>
</dbReference>
<dbReference type="RefSeq" id="WP_011657673.1">
    <property type="nucleotide sequence ID" value="NC_010551.1"/>
</dbReference>
<dbReference type="SMR" id="B1YUV9"/>
<dbReference type="GeneID" id="93085286"/>
<dbReference type="KEGG" id="bac:BamMC406_2377"/>
<dbReference type="HOGENOM" id="CLU_013386_1_0_4"/>
<dbReference type="OrthoDB" id="871140at2"/>
<dbReference type="UniPathway" id="UPA00664"/>
<dbReference type="Proteomes" id="UP000001680">
    <property type="component" value="Chromosome 1"/>
</dbReference>
<dbReference type="GO" id="GO:0005886">
    <property type="term" value="C:plasma membrane"/>
    <property type="evidence" value="ECO:0007669"/>
    <property type="project" value="UniProtKB-SubCell"/>
</dbReference>
<dbReference type="GO" id="GO:0008961">
    <property type="term" value="F:phosphatidylglycerol-prolipoprotein diacylglyceryl transferase activity"/>
    <property type="evidence" value="ECO:0007669"/>
    <property type="project" value="UniProtKB-UniRule"/>
</dbReference>
<dbReference type="GO" id="GO:0042158">
    <property type="term" value="P:lipoprotein biosynthetic process"/>
    <property type="evidence" value="ECO:0007669"/>
    <property type="project" value="UniProtKB-UniRule"/>
</dbReference>
<dbReference type="HAMAP" id="MF_01147">
    <property type="entry name" value="Lgt"/>
    <property type="match status" value="1"/>
</dbReference>
<dbReference type="InterPro" id="IPR001640">
    <property type="entry name" value="Lgt"/>
</dbReference>
<dbReference type="NCBIfam" id="TIGR00544">
    <property type="entry name" value="lgt"/>
    <property type="match status" value="1"/>
</dbReference>
<dbReference type="PANTHER" id="PTHR30589:SF0">
    <property type="entry name" value="PHOSPHATIDYLGLYCEROL--PROLIPOPROTEIN DIACYLGLYCERYL TRANSFERASE"/>
    <property type="match status" value="1"/>
</dbReference>
<dbReference type="PANTHER" id="PTHR30589">
    <property type="entry name" value="PROLIPOPROTEIN DIACYLGLYCERYL TRANSFERASE"/>
    <property type="match status" value="1"/>
</dbReference>
<dbReference type="Pfam" id="PF01790">
    <property type="entry name" value="LGT"/>
    <property type="match status" value="1"/>
</dbReference>
<dbReference type="PROSITE" id="PS01311">
    <property type="entry name" value="LGT"/>
    <property type="match status" value="1"/>
</dbReference>
<gene>
    <name evidence="1" type="primary">lgt</name>
    <name type="ordered locus">BamMC406_2377</name>
</gene>
<reference key="1">
    <citation type="submission" date="2008-04" db="EMBL/GenBank/DDBJ databases">
        <title>Complete sequence of chromosome 1 of Burkholderia ambifaria MC40-6.</title>
        <authorList>
            <person name="Copeland A."/>
            <person name="Lucas S."/>
            <person name="Lapidus A."/>
            <person name="Glavina del Rio T."/>
            <person name="Dalin E."/>
            <person name="Tice H."/>
            <person name="Pitluck S."/>
            <person name="Chain P."/>
            <person name="Malfatti S."/>
            <person name="Shin M."/>
            <person name="Vergez L."/>
            <person name="Lang D."/>
            <person name="Schmutz J."/>
            <person name="Larimer F."/>
            <person name="Land M."/>
            <person name="Hauser L."/>
            <person name="Kyrpides N."/>
            <person name="Lykidis A."/>
            <person name="Ramette A."/>
            <person name="Konstantinidis K."/>
            <person name="Tiedje J."/>
            <person name="Richardson P."/>
        </authorList>
    </citation>
    <scope>NUCLEOTIDE SEQUENCE [LARGE SCALE GENOMIC DNA]</scope>
    <source>
        <strain>MC40-6</strain>
    </source>
</reference>
<keyword id="KW-0997">Cell inner membrane</keyword>
<keyword id="KW-1003">Cell membrane</keyword>
<keyword id="KW-0472">Membrane</keyword>
<keyword id="KW-0808">Transferase</keyword>
<keyword id="KW-0812">Transmembrane</keyword>
<keyword id="KW-1133">Transmembrane helix</keyword>
<proteinExistence type="inferred from homology"/>
<name>LGT_BURA4</name>
<protein>
    <recommendedName>
        <fullName evidence="1">Phosphatidylglycerol--prolipoprotein diacylglyceryl transferase</fullName>
        <ecNumber evidence="1">2.5.1.145</ecNumber>
    </recommendedName>
</protein>
<feature type="chain" id="PRO_1000137407" description="Phosphatidylglycerol--prolipoprotein diacylglyceryl transferase">
    <location>
        <begin position="1"/>
        <end position="296"/>
    </location>
</feature>
<feature type="transmembrane region" description="Helical" evidence="1">
    <location>
        <begin position="17"/>
        <end position="37"/>
    </location>
</feature>
<feature type="transmembrane region" description="Helical" evidence="1">
    <location>
        <begin position="59"/>
        <end position="79"/>
    </location>
</feature>
<feature type="transmembrane region" description="Helical" evidence="1">
    <location>
        <begin position="97"/>
        <end position="117"/>
    </location>
</feature>
<feature type="transmembrane region" description="Helical" evidence="1">
    <location>
        <begin position="129"/>
        <end position="149"/>
    </location>
</feature>
<feature type="transmembrane region" description="Helical" evidence="1">
    <location>
        <begin position="203"/>
        <end position="223"/>
    </location>
</feature>
<feature type="transmembrane region" description="Helical" evidence="1">
    <location>
        <begin position="230"/>
        <end position="250"/>
    </location>
</feature>
<feature type="transmembrane region" description="Helical" evidence="1">
    <location>
        <begin position="265"/>
        <end position="285"/>
    </location>
</feature>
<feature type="binding site" evidence="1">
    <location>
        <position position="142"/>
    </location>
    <ligand>
        <name>a 1,2-diacyl-sn-glycero-3-phospho-(1'-sn-glycerol)</name>
        <dbReference type="ChEBI" id="CHEBI:64716"/>
    </ligand>
</feature>
<organism>
    <name type="scientific">Burkholderia ambifaria (strain MC40-6)</name>
    <dbReference type="NCBI Taxonomy" id="398577"/>
    <lineage>
        <taxon>Bacteria</taxon>
        <taxon>Pseudomonadati</taxon>
        <taxon>Pseudomonadota</taxon>
        <taxon>Betaproteobacteria</taxon>
        <taxon>Burkholderiales</taxon>
        <taxon>Burkholderiaceae</taxon>
        <taxon>Burkholderia</taxon>
        <taxon>Burkholderia cepacia complex</taxon>
    </lineage>
</organism>
<sequence>MIIHPNFDPVAIHLGPLAVRWYGLMYLVGFIAAIVVGRIRLKLPHVAAQGWTAKDIDDMMFYGVLGTVLGGRLGYVLFYKADFYFSHPLDVFKVWEGGMSFHGGFLGVTLAMVLFAWQRKRHWLQVTDFVAPMVPAGLAAGRLGNFINGELWGRVTDPNAPWAMLFPGAMRDDAAWLSKHPALVEKWHLADVFMQYQMLPRHPSQLYEIALEGIALFFVLFFFSRKPRPLGAVSALFLIGYGLARFTVEFAREPDDFLGLLALGLSMGQWLSLPMILAGIALLVWGYRRRPVNAAA</sequence>
<comment type="function">
    <text evidence="1">Catalyzes the transfer of the diacylglyceryl group from phosphatidylglycerol to the sulfhydryl group of the N-terminal cysteine of a prolipoprotein, the first step in the formation of mature lipoproteins.</text>
</comment>
<comment type="catalytic activity">
    <reaction evidence="1">
        <text>L-cysteinyl-[prolipoprotein] + a 1,2-diacyl-sn-glycero-3-phospho-(1'-sn-glycerol) = an S-1,2-diacyl-sn-glyceryl-L-cysteinyl-[prolipoprotein] + sn-glycerol 1-phosphate + H(+)</text>
        <dbReference type="Rhea" id="RHEA:56712"/>
        <dbReference type="Rhea" id="RHEA-COMP:14679"/>
        <dbReference type="Rhea" id="RHEA-COMP:14680"/>
        <dbReference type="ChEBI" id="CHEBI:15378"/>
        <dbReference type="ChEBI" id="CHEBI:29950"/>
        <dbReference type="ChEBI" id="CHEBI:57685"/>
        <dbReference type="ChEBI" id="CHEBI:64716"/>
        <dbReference type="ChEBI" id="CHEBI:140658"/>
        <dbReference type="EC" id="2.5.1.145"/>
    </reaction>
</comment>
<comment type="pathway">
    <text evidence="1">Protein modification; lipoprotein biosynthesis (diacylglyceryl transfer).</text>
</comment>
<comment type="subcellular location">
    <subcellularLocation>
        <location evidence="1">Cell inner membrane</location>
        <topology evidence="1">Multi-pass membrane protein</topology>
    </subcellularLocation>
</comment>
<comment type="similarity">
    <text evidence="1">Belongs to the Lgt family.</text>
</comment>
<evidence type="ECO:0000255" key="1">
    <source>
        <dbReference type="HAMAP-Rule" id="MF_01147"/>
    </source>
</evidence>
<accession>B1YUV9</accession>